<feature type="chain" id="PRO_0000426099" description="Beta-mannosyltransferase 1">
    <location>
        <begin position="1"/>
        <end position="652"/>
    </location>
</feature>
<feature type="topological domain" description="Cytoplasmic" evidence="2">
    <location>
        <begin position="1"/>
        <end position="15"/>
    </location>
</feature>
<feature type="transmembrane region" description="Helical" evidence="2">
    <location>
        <begin position="16"/>
        <end position="34"/>
    </location>
</feature>
<feature type="topological domain" description="Extracellular" evidence="2">
    <location>
        <begin position="35"/>
        <end position="652"/>
    </location>
</feature>
<feature type="region of interest" description="Disordered" evidence="3">
    <location>
        <begin position="536"/>
        <end position="621"/>
    </location>
</feature>
<feature type="coiled-coil region" evidence="2">
    <location>
        <begin position="535"/>
        <end position="652"/>
    </location>
</feature>
<feature type="glycosylation site" description="N-linked (GlcNAc...) asparagine" evidence="2">
    <location>
        <position position="57"/>
    </location>
</feature>
<accession>F2QZ65</accession>
<dbReference type="EC" id="2.4.1.-"/>
<dbReference type="EMBL" id="FR839631">
    <property type="protein sequence ID" value="CCA40693.1"/>
    <property type="status" value="ALT_INIT"/>
    <property type="molecule type" value="Genomic_DNA"/>
</dbReference>
<dbReference type="SMR" id="F2QZ65"/>
<dbReference type="CAZy" id="GT91">
    <property type="family name" value="Glycosyltransferase Family 91"/>
</dbReference>
<dbReference type="GlyCosmos" id="F2QZ65">
    <property type="glycosylation" value="1 site, No reported glycans"/>
</dbReference>
<dbReference type="HOGENOM" id="CLU_013841_3_0_1"/>
<dbReference type="Proteomes" id="UP000006853">
    <property type="component" value="Chromosome 4"/>
</dbReference>
<dbReference type="GO" id="GO:0016020">
    <property type="term" value="C:membrane"/>
    <property type="evidence" value="ECO:0007669"/>
    <property type="project" value="UniProtKB-SubCell"/>
</dbReference>
<dbReference type="GO" id="GO:0015630">
    <property type="term" value="C:microtubule cytoskeleton"/>
    <property type="evidence" value="ECO:0007669"/>
    <property type="project" value="TreeGrafter"/>
</dbReference>
<dbReference type="GO" id="GO:0000030">
    <property type="term" value="F:mannosyltransferase activity"/>
    <property type="evidence" value="ECO:0007669"/>
    <property type="project" value="InterPro"/>
</dbReference>
<dbReference type="GO" id="GO:0071555">
    <property type="term" value="P:cell wall organization"/>
    <property type="evidence" value="ECO:0007669"/>
    <property type="project" value="UniProtKB-KW"/>
</dbReference>
<dbReference type="GO" id="GO:0000226">
    <property type="term" value="P:microtubule cytoskeleton organization"/>
    <property type="evidence" value="ECO:0007669"/>
    <property type="project" value="TreeGrafter"/>
</dbReference>
<dbReference type="InterPro" id="IPR021988">
    <property type="entry name" value="BMT1"/>
</dbReference>
<dbReference type="InterPro" id="IPR051483">
    <property type="entry name" value="MAP7_domain-containing"/>
</dbReference>
<dbReference type="PANTHER" id="PTHR15073:SF3">
    <property type="entry name" value="MAP7 DOMAIN-CONTAINING PROTEIN 2"/>
    <property type="match status" value="1"/>
</dbReference>
<dbReference type="PANTHER" id="PTHR15073">
    <property type="entry name" value="MICROTUBULE-ASSOCIATED PROTEIN"/>
    <property type="match status" value="1"/>
</dbReference>
<dbReference type="Pfam" id="PF12141">
    <property type="entry name" value="BMT"/>
    <property type="match status" value="2"/>
</dbReference>
<organism>
    <name type="scientific">Komagataella phaffii (strain ATCC 76273 / CBS 7435 / CECT 11047 / NRRL Y-11430 / Wegner 21-1)</name>
    <name type="common">Yeast</name>
    <name type="synonym">Pichia pastoris</name>
    <dbReference type="NCBI Taxonomy" id="981350"/>
    <lineage>
        <taxon>Eukaryota</taxon>
        <taxon>Fungi</taxon>
        <taxon>Dikarya</taxon>
        <taxon>Ascomycota</taxon>
        <taxon>Saccharomycotina</taxon>
        <taxon>Pichiomycetes</taxon>
        <taxon>Pichiales</taxon>
        <taxon>Pichiaceae</taxon>
        <taxon>Komagataella</taxon>
    </lineage>
</organism>
<name>BMT1_KOMPC</name>
<evidence type="ECO:0000250" key="1"/>
<evidence type="ECO:0000255" key="2"/>
<evidence type="ECO:0000256" key="3">
    <source>
        <dbReference type="SAM" id="MobiDB-lite"/>
    </source>
</evidence>
<evidence type="ECO:0000305" key="4"/>
<comment type="function">
    <text evidence="1">Beta-mannosyltransferase involved in cell wall biosynthesis. Involved in the beta-mannosylation of outer chains of N-glycans (By similarity).</text>
</comment>
<comment type="subcellular location">
    <subcellularLocation>
        <location evidence="4">Membrane</location>
        <topology evidence="4">Single-pass type II membrane protein</topology>
    </subcellularLocation>
</comment>
<comment type="similarity">
    <text evidence="4">Belongs to the BMT family.</text>
</comment>
<comment type="sequence caution" evidence="4">
    <conflict type="erroneous initiation">
        <sequence resource="EMBL-CDS" id="CCA40693"/>
    </conflict>
    <text>Truncated N-terminus.</text>
</comment>
<keyword id="KW-0961">Cell wall biogenesis/degradation</keyword>
<keyword id="KW-0175">Coiled coil</keyword>
<keyword id="KW-0325">Glycoprotein</keyword>
<keyword id="KW-0328">Glycosyltransferase</keyword>
<keyword id="KW-0472">Membrane</keyword>
<keyword id="KW-0735">Signal-anchor</keyword>
<keyword id="KW-0808">Transferase</keyword>
<keyword id="KW-0812">Transmembrane</keyword>
<keyword id="KW-1133">Transmembrane helix</keyword>
<reference key="1">
    <citation type="journal article" date="2011" name="J. Biotechnol.">
        <title>High-quality genome sequence of Pichia pastoris CBS7435.</title>
        <authorList>
            <person name="Kueberl A."/>
            <person name="Schneider J."/>
            <person name="Thallinger G.G."/>
            <person name="Anderl I."/>
            <person name="Wibberg D."/>
            <person name="Hajek T."/>
            <person name="Jaenicke S."/>
            <person name="Brinkrolf K."/>
            <person name="Goesmann A."/>
            <person name="Szczepanowski R."/>
            <person name="Puehler A."/>
            <person name="Schwab H."/>
            <person name="Glieder A."/>
            <person name="Pichler H."/>
        </authorList>
    </citation>
    <scope>NUCLEOTIDE SEQUENCE [LARGE SCALE GENOMIC DNA]</scope>
    <source>
        <strain>ATCC 76273 / CBS 7435 / CECT 11047 / NRRL Y-11430 / Wegner 21-1</strain>
    </source>
</reference>
<reference key="2">
    <citation type="journal article" date="2016" name="FEMS Yeast Res.">
        <title>Curation of the genome annotation of Pichia pastoris (Komagataella phaffii) CBS7435 from gene level to protein function.</title>
        <authorList>
            <person name="Valli M."/>
            <person name="Tatto N.E."/>
            <person name="Peymann A."/>
            <person name="Gruber C."/>
            <person name="Landes N."/>
            <person name="Ekker H."/>
            <person name="Thallinger G.G."/>
            <person name="Mattanovich D."/>
            <person name="Gasser B."/>
            <person name="Graf A.B."/>
        </authorList>
    </citation>
    <scope>GENOME REANNOTATION</scope>
    <source>
        <strain>ATCC 76273 / CBS 7435 / CECT 11047 / NRRL Y-11430 / Wegner 21-1</strain>
    </source>
</reference>
<gene>
    <name type="primary">BMT1</name>
    <name type="ordered locus">PP7435_Chr4-0529</name>
</gene>
<protein>
    <recommendedName>
        <fullName>Beta-mannosyltransferase 1</fullName>
        <ecNumber>2.4.1.-</ecNumber>
    </recommendedName>
</protein>
<proteinExistence type="inferred from homology"/>
<sequence>MVDLFQWLKFYSMRRLGQVAITLVLLNLFVFLGYKFTPSTVIGSPSWEPAVVPTVFNESYLDSLQFTDINVDSFLSDTNGRISVTCDSLAYKGLVKTSKKKELDCDMAYIRRKIFSSEEYGVLADLEAQDITEEQRIKKHWFTFYGSSVYLPEHEVHYLVRRVLFSKVGRADTPVISLLVAQLYDKDWNELTPHTLEIVNPATGNVTPQTFPQLIHVPIEWSVDDKWKGTEDPRVFLKPSKTGVSEPIVLFNLQSSLCDGKRGMFVTSPFRSDKVNLLDIEDKERPNSEKNWSPFFLDDVEVSKYSTGYVHFVYSFNPLKVIKCSLDTGACRMIYESPEEGRFGSELRGATPMVKLPVHLSLPKGKEVWVAFPRTRLRDCGCSRTTYRPVLTLFVKEGNKFYTELISSSIDFHIDVLSYDAKGESCSGSISVLIPNGIDSWDVSKKQGGKSDILTLTLSEADRNTVVVHVKGLLDYLLVLNGEGPIHDSHSFKNVLSTNHFKSDTTLLNSVKAAECAIFSSRDYCKKYGETRGEPARYAKQMENERKEKEKKEKEAKEKLEAEKAEMEEAVRKAQEAIAQKEREKEEAEQEKKAQQEAKEKEAEEKAAKEKEAKENEAKKKIIVEKLAKEQEEAEKLEAKKKLYQLQEEERS</sequence>